<reference key="1">
    <citation type="submission" date="2005-09" db="EMBL/GenBank/DDBJ databases">
        <authorList>
            <person name="Glass J.I."/>
            <person name="Lartigue C."/>
            <person name="Pfannkoch C."/>
            <person name="Baden-Tillson H."/>
            <person name="Smith H.O."/>
            <person name="Venter J.C."/>
            <person name="Roske K."/>
            <person name="Wise K.S."/>
            <person name="Calcutt M.J."/>
            <person name="Nelson W.C."/>
            <person name="Nierman W.C."/>
        </authorList>
    </citation>
    <scope>NUCLEOTIDE SEQUENCE [LARGE SCALE GENOMIC DNA]</scope>
    <source>
        <strain>California kid / ATCC 27343 / NCTC 10154</strain>
    </source>
</reference>
<organism>
    <name type="scientific">Mycoplasma capricolum subsp. capricolum (strain California kid / ATCC 27343 / NCTC 10154)</name>
    <dbReference type="NCBI Taxonomy" id="340047"/>
    <lineage>
        <taxon>Bacteria</taxon>
        <taxon>Bacillati</taxon>
        <taxon>Mycoplasmatota</taxon>
        <taxon>Mollicutes</taxon>
        <taxon>Mycoplasmataceae</taxon>
        <taxon>Mycoplasma</taxon>
    </lineage>
</organism>
<sequence>MKKKIVAIVGKPNVGKSSLFNRIIKEKKSIVDNKPGVTRDRIYSNAEWLTREFILIDTGGISVDQQLFSNEIQIQTQIAIEQADVIIFVVDFLNRLDKDDKIIAKILHKSKKPVILAINKYDKKTIDEHNYEFMNLGFSDLYFISSTHGIGIGDLLDKVISYISKNDVELKDDSTKIAIIGKPNVGKSSLVNSLVNENRMIVSEIEGTTLDAVDISFSYNKKKYIVIDTAGIRKKSKLGQTVEKYSYLRSLSAIANSDIVLLMIDATKPITDQDTNIGGLIYDEKKPVIIVVNKWDLIKNKQEQILKKEEEIRAYFKYLSYAKIIFISALDKTRVTKILDLIDEIKQSLSVKVKTYVLNEVLNKAQLINPAPEFNGNRLKIYYASQVQAYIPTFVLFCNNPNYLHFSYKRFLENQIRFSFGFDSIPINLIFRERK</sequence>
<feature type="chain" id="PRO_1000011669" description="GTPase Der">
    <location>
        <begin position="1"/>
        <end position="435"/>
    </location>
</feature>
<feature type="domain" description="EngA-type G 1">
    <location>
        <begin position="4"/>
        <end position="167"/>
    </location>
</feature>
<feature type="domain" description="EngA-type G 2">
    <location>
        <begin position="175"/>
        <end position="350"/>
    </location>
</feature>
<feature type="domain" description="KH-like" evidence="1">
    <location>
        <begin position="351"/>
        <end position="435"/>
    </location>
</feature>
<feature type="binding site" evidence="1">
    <location>
        <begin position="10"/>
        <end position="17"/>
    </location>
    <ligand>
        <name>GTP</name>
        <dbReference type="ChEBI" id="CHEBI:37565"/>
        <label>1</label>
    </ligand>
</feature>
<feature type="binding site" evidence="1">
    <location>
        <begin position="57"/>
        <end position="61"/>
    </location>
    <ligand>
        <name>GTP</name>
        <dbReference type="ChEBI" id="CHEBI:37565"/>
        <label>1</label>
    </ligand>
</feature>
<feature type="binding site" evidence="1">
    <location>
        <begin position="119"/>
        <end position="122"/>
    </location>
    <ligand>
        <name>GTP</name>
        <dbReference type="ChEBI" id="CHEBI:37565"/>
        <label>1</label>
    </ligand>
</feature>
<feature type="binding site" evidence="1">
    <location>
        <begin position="181"/>
        <end position="188"/>
    </location>
    <ligand>
        <name>GTP</name>
        <dbReference type="ChEBI" id="CHEBI:37565"/>
        <label>2</label>
    </ligand>
</feature>
<feature type="binding site" evidence="1">
    <location>
        <begin position="228"/>
        <end position="232"/>
    </location>
    <ligand>
        <name>GTP</name>
        <dbReference type="ChEBI" id="CHEBI:37565"/>
        <label>2</label>
    </ligand>
</feature>
<feature type="binding site" evidence="1">
    <location>
        <begin position="293"/>
        <end position="296"/>
    </location>
    <ligand>
        <name>GTP</name>
        <dbReference type="ChEBI" id="CHEBI:37565"/>
        <label>2</label>
    </ligand>
</feature>
<protein>
    <recommendedName>
        <fullName evidence="1">GTPase Der</fullName>
    </recommendedName>
    <alternativeName>
        <fullName evidence="1">GTP-binding protein EngA</fullName>
    </alternativeName>
</protein>
<dbReference type="EMBL" id="CP000123">
    <property type="protein sequence ID" value="ABC01662.1"/>
    <property type="molecule type" value="Genomic_DNA"/>
</dbReference>
<dbReference type="RefSeq" id="WP_011387442.1">
    <property type="nucleotide sequence ID" value="NC_007633.1"/>
</dbReference>
<dbReference type="SMR" id="Q2SRR7"/>
<dbReference type="GeneID" id="23778467"/>
<dbReference type="KEGG" id="mcp:MCAP_0577"/>
<dbReference type="HOGENOM" id="CLU_016077_6_2_14"/>
<dbReference type="PhylomeDB" id="Q2SRR7"/>
<dbReference type="Proteomes" id="UP000001928">
    <property type="component" value="Chromosome"/>
</dbReference>
<dbReference type="GO" id="GO:0016887">
    <property type="term" value="F:ATP hydrolysis activity"/>
    <property type="evidence" value="ECO:0007669"/>
    <property type="project" value="InterPro"/>
</dbReference>
<dbReference type="GO" id="GO:0005525">
    <property type="term" value="F:GTP binding"/>
    <property type="evidence" value="ECO:0007669"/>
    <property type="project" value="UniProtKB-UniRule"/>
</dbReference>
<dbReference type="GO" id="GO:0043022">
    <property type="term" value="F:ribosome binding"/>
    <property type="evidence" value="ECO:0007669"/>
    <property type="project" value="TreeGrafter"/>
</dbReference>
<dbReference type="GO" id="GO:0042254">
    <property type="term" value="P:ribosome biogenesis"/>
    <property type="evidence" value="ECO:0007669"/>
    <property type="project" value="UniProtKB-KW"/>
</dbReference>
<dbReference type="CDD" id="cd01894">
    <property type="entry name" value="EngA1"/>
    <property type="match status" value="1"/>
</dbReference>
<dbReference type="CDD" id="cd01895">
    <property type="entry name" value="EngA2"/>
    <property type="match status" value="1"/>
</dbReference>
<dbReference type="FunFam" id="3.30.300.20:FF:000004">
    <property type="entry name" value="GTPase Der"/>
    <property type="match status" value="1"/>
</dbReference>
<dbReference type="FunFam" id="3.40.50.300:FF:000040">
    <property type="entry name" value="GTPase Der"/>
    <property type="match status" value="1"/>
</dbReference>
<dbReference type="FunFam" id="3.40.50.300:FF:000057">
    <property type="entry name" value="GTPase Der"/>
    <property type="match status" value="1"/>
</dbReference>
<dbReference type="Gene3D" id="3.30.300.20">
    <property type="match status" value="1"/>
</dbReference>
<dbReference type="Gene3D" id="3.40.50.300">
    <property type="entry name" value="P-loop containing nucleotide triphosphate hydrolases"/>
    <property type="match status" value="2"/>
</dbReference>
<dbReference type="HAMAP" id="MF_00195">
    <property type="entry name" value="GTPase_Der"/>
    <property type="match status" value="1"/>
</dbReference>
<dbReference type="InterPro" id="IPR003593">
    <property type="entry name" value="AAA+_ATPase"/>
</dbReference>
<dbReference type="InterPro" id="IPR031166">
    <property type="entry name" value="G_ENGA"/>
</dbReference>
<dbReference type="InterPro" id="IPR006073">
    <property type="entry name" value="GTP-bd"/>
</dbReference>
<dbReference type="InterPro" id="IPR016484">
    <property type="entry name" value="GTPase_Der"/>
</dbReference>
<dbReference type="InterPro" id="IPR032859">
    <property type="entry name" value="KH_dom-like"/>
</dbReference>
<dbReference type="InterPro" id="IPR015946">
    <property type="entry name" value="KH_dom-like_a/b"/>
</dbReference>
<dbReference type="InterPro" id="IPR027417">
    <property type="entry name" value="P-loop_NTPase"/>
</dbReference>
<dbReference type="InterPro" id="IPR005225">
    <property type="entry name" value="Small_GTP-bd"/>
</dbReference>
<dbReference type="NCBIfam" id="TIGR03594">
    <property type="entry name" value="GTPase_EngA"/>
    <property type="match status" value="1"/>
</dbReference>
<dbReference type="NCBIfam" id="TIGR00231">
    <property type="entry name" value="small_GTP"/>
    <property type="match status" value="2"/>
</dbReference>
<dbReference type="PANTHER" id="PTHR43834">
    <property type="entry name" value="GTPASE DER"/>
    <property type="match status" value="1"/>
</dbReference>
<dbReference type="PANTHER" id="PTHR43834:SF6">
    <property type="entry name" value="GTPASE DER"/>
    <property type="match status" value="1"/>
</dbReference>
<dbReference type="Pfam" id="PF14714">
    <property type="entry name" value="KH_dom-like"/>
    <property type="match status" value="1"/>
</dbReference>
<dbReference type="Pfam" id="PF01926">
    <property type="entry name" value="MMR_HSR1"/>
    <property type="match status" value="2"/>
</dbReference>
<dbReference type="PIRSF" id="PIRSF006485">
    <property type="entry name" value="GTP-binding_EngA"/>
    <property type="match status" value="1"/>
</dbReference>
<dbReference type="PRINTS" id="PR00326">
    <property type="entry name" value="GTP1OBG"/>
</dbReference>
<dbReference type="SMART" id="SM00382">
    <property type="entry name" value="AAA"/>
    <property type="match status" value="2"/>
</dbReference>
<dbReference type="SUPFAM" id="SSF52540">
    <property type="entry name" value="P-loop containing nucleoside triphosphate hydrolases"/>
    <property type="match status" value="2"/>
</dbReference>
<dbReference type="PROSITE" id="PS51712">
    <property type="entry name" value="G_ENGA"/>
    <property type="match status" value="2"/>
</dbReference>
<keyword id="KW-0342">GTP-binding</keyword>
<keyword id="KW-0547">Nucleotide-binding</keyword>
<keyword id="KW-0677">Repeat</keyword>
<keyword id="KW-0690">Ribosome biogenesis</keyword>
<evidence type="ECO:0000255" key="1">
    <source>
        <dbReference type="HAMAP-Rule" id="MF_00195"/>
    </source>
</evidence>
<name>DER_MYCCT</name>
<accession>Q2SRR7</accession>
<proteinExistence type="inferred from homology"/>
<comment type="function">
    <text evidence="1">GTPase that plays an essential role in the late steps of ribosome biogenesis.</text>
</comment>
<comment type="subunit">
    <text evidence="1">Associates with the 50S ribosomal subunit.</text>
</comment>
<comment type="similarity">
    <text evidence="1">Belongs to the TRAFAC class TrmE-Era-EngA-EngB-Septin-like GTPase superfamily. EngA (Der) GTPase family.</text>
</comment>
<gene>
    <name evidence="1" type="primary">der</name>
    <name type="synonym">engA</name>
    <name type="ordered locus">MCAP_0577</name>
</gene>